<feature type="chain" id="PRO_0000192893" description="Small ribosomal subunit protein eS25">
    <location>
        <begin position="1"/>
        <end position="110"/>
    </location>
</feature>
<feature type="region of interest" description="Disordered" evidence="1">
    <location>
        <begin position="1"/>
        <end position="37"/>
    </location>
</feature>
<feature type="compositionally biased region" description="Basic and acidic residues" evidence="1">
    <location>
        <begin position="12"/>
        <end position="37"/>
    </location>
</feature>
<comment type="similarity">
    <text evidence="2">Belongs to the eukaryotic ribosomal protein eS25 family.</text>
</comment>
<evidence type="ECO:0000256" key="1">
    <source>
        <dbReference type="SAM" id="MobiDB-lite"/>
    </source>
</evidence>
<evidence type="ECO:0000305" key="2"/>
<organism>
    <name type="scientific">Saccharolobus solfataricus (strain ATCC 35092 / DSM 1617 / JCM 11322 / P2)</name>
    <name type="common">Sulfolobus solfataricus</name>
    <dbReference type="NCBI Taxonomy" id="273057"/>
    <lineage>
        <taxon>Archaea</taxon>
        <taxon>Thermoproteota</taxon>
        <taxon>Thermoprotei</taxon>
        <taxon>Sulfolobales</taxon>
        <taxon>Sulfolobaceae</taxon>
        <taxon>Saccharolobus</taxon>
    </lineage>
</organism>
<sequence length="110" mass="12346">MGGASKKPISTMEKRLKKEAEKQQKAEEKKKGPSKTGKEIISRAVTIDEETKKKVLDEIKKESIITPYALATKSGISISVARKILKELENQNVVKLYSKNRRLEIYIAAS</sequence>
<accession>Q97ZZ6</accession>
<gene>
    <name type="primary">rps25e</name>
    <name type="ordered locus">SSO0425</name>
</gene>
<name>RS25_SACS2</name>
<keyword id="KW-0002">3D-structure</keyword>
<keyword id="KW-1185">Reference proteome</keyword>
<keyword id="KW-0687">Ribonucleoprotein</keyword>
<keyword id="KW-0689">Ribosomal protein</keyword>
<proteinExistence type="evidence at protein level"/>
<protein>
    <recommendedName>
        <fullName evidence="2">Small ribosomal subunit protein eS25</fullName>
    </recommendedName>
    <alternativeName>
        <fullName>30S ribosomal protein S25e</fullName>
    </alternativeName>
</protein>
<reference key="1">
    <citation type="journal article" date="2001" name="Proc. Natl. Acad. Sci. U.S.A.">
        <title>The complete genome of the crenarchaeon Sulfolobus solfataricus P2.</title>
        <authorList>
            <person name="She Q."/>
            <person name="Singh R.K."/>
            <person name="Confalonieri F."/>
            <person name="Zivanovic Y."/>
            <person name="Allard G."/>
            <person name="Awayez M.J."/>
            <person name="Chan-Weiher C.C.-Y."/>
            <person name="Clausen I.G."/>
            <person name="Curtis B.A."/>
            <person name="De Moors A."/>
            <person name="Erauso G."/>
            <person name="Fletcher C."/>
            <person name="Gordon P.M.K."/>
            <person name="Heikamp-de Jong I."/>
            <person name="Jeffries A.C."/>
            <person name="Kozera C.J."/>
            <person name="Medina N."/>
            <person name="Peng X."/>
            <person name="Thi-Ngoc H.P."/>
            <person name="Redder P."/>
            <person name="Schenk M.E."/>
            <person name="Theriault C."/>
            <person name="Tolstrup N."/>
            <person name="Charlebois R.L."/>
            <person name="Doolittle W.F."/>
            <person name="Duguet M."/>
            <person name="Gaasterland T."/>
            <person name="Garrett R.A."/>
            <person name="Ragan M.A."/>
            <person name="Sensen C.W."/>
            <person name="Van der Oost J."/>
        </authorList>
    </citation>
    <scope>NUCLEOTIDE SEQUENCE [LARGE SCALE GENOMIC DNA]</scope>
    <source>
        <strain>ATCC 35092 / DSM 1617 / JCM 11322 / P2</strain>
    </source>
</reference>
<dbReference type="EMBL" id="AE006641">
    <property type="protein sequence ID" value="AAK40749.1"/>
    <property type="molecule type" value="Genomic_DNA"/>
</dbReference>
<dbReference type="PIR" id="F90186">
    <property type="entry name" value="F90186"/>
</dbReference>
<dbReference type="RefSeq" id="WP_009988758.1">
    <property type="nucleotide sequence ID" value="NC_002754.1"/>
</dbReference>
<dbReference type="PDB" id="9FHL">
    <property type="method" value="EM"/>
    <property type="resolution" value="2.50 A"/>
    <property type="chains" value="c=1-110"/>
</dbReference>
<dbReference type="PDB" id="9FRA">
    <property type="method" value="EM"/>
    <property type="resolution" value="2.80 A"/>
    <property type="chains" value="c=1-110"/>
</dbReference>
<dbReference type="PDB" id="9FRK">
    <property type="method" value="EM"/>
    <property type="resolution" value="3.00 A"/>
    <property type="chains" value="c=1-110"/>
</dbReference>
<dbReference type="PDB" id="9FRL">
    <property type="method" value="EM"/>
    <property type="resolution" value="2.97 A"/>
    <property type="chains" value="c=1-110"/>
</dbReference>
<dbReference type="PDB" id="9FS6">
    <property type="method" value="EM"/>
    <property type="resolution" value="2.90 A"/>
    <property type="chains" value="c=1-110"/>
</dbReference>
<dbReference type="PDB" id="9FS8">
    <property type="method" value="EM"/>
    <property type="resolution" value="3.70 A"/>
    <property type="chains" value="c=1-110"/>
</dbReference>
<dbReference type="PDB" id="9FSF">
    <property type="method" value="EM"/>
    <property type="resolution" value="2.80 A"/>
    <property type="chains" value="c=1-110"/>
</dbReference>
<dbReference type="PDB" id="9FY0">
    <property type="method" value="EM"/>
    <property type="resolution" value="2.90 A"/>
    <property type="chains" value="c=1-110"/>
</dbReference>
<dbReference type="PDBsum" id="9FHL"/>
<dbReference type="PDBsum" id="9FRA"/>
<dbReference type="PDBsum" id="9FRK"/>
<dbReference type="PDBsum" id="9FRL"/>
<dbReference type="PDBsum" id="9FS6"/>
<dbReference type="PDBsum" id="9FS8"/>
<dbReference type="PDBsum" id="9FSF"/>
<dbReference type="PDBsum" id="9FY0"/>
<dbReference type="EMDB" id="EMD-50445"/>
<dbReference type="EMDB" id="EMD-50709"/>
<dbReference type="EMDB" id="EMD-50716"/>
<dbReference type="EMDB" id="EMD-50717"/>
<dbReference type="EMDB" id="EMD-50724"/>
<dbReference type="EMDB" id="EMD-50725"/>
<dbReference type="EMDB" id="EMD-50727"/>
<dbReference type="EMDB" id="EMD-50854"/>
<dbReference type="SMR" id="Q97ZZ6"/>
<dbReference type="FunCoup" id="Q97ZZ6">
    <property type="interactions" value="151"/>
</dbReference>
<dbReference type="STRING" id="273057.SSO0425"/>
<dbReference type="PaxDb" id="273057-SSO0425"/>
<dbReference type="EnsemblBacteria" id="AAK40749">
    <property type="protein sequence ID" value="AAK40749"/>
    <property type="gene ID" value="SSO0425"/>
</dbReference>
<dbReference type="KEGG" id="sso:SSO0425"/>
<dbReference type="PATRIC" id="fig|273057.12.peg.416"/>
<dbReference type="eggNOG" id="arCOG04327">
    <property type="taxonomic scope" value="Archaea"/>
</dbReference>
<dbReference type="HOGENOM" id="CLU_171557_0_0_2"/>
<dbReference type="InParanoid" id="Q97ZZ6"/>
<dbReference type="PhylomeDB" id="Q97ZZ6"/>
<dbReference type="Proteomes" id="UP000001974">
    <property type="component" value="Chromosome"/>
</dbReference>
<dbReference type="GO" id="GO:0022627">
    <property type="term" value="C:cytosolic small ribosomal subunit"/>
    <property type="evidence" value="ECO:0000318"/>
    <property type="project" value="GO_Central"/>
</dbReference>
<dbReference type="GO" id="GO:0003735">
    <property type="term" value="F:structural constituent of ribosome"/>
    <property type="evidence" value="ECO:0000318"/>
    <property type="project" value="GO_Central"/>
</dbReference>
<dbReference type="Gene3D" id="3.30.63.20">
    <property type="match status" value="1"/>
</dbReference>
<dbReference type="InterPro" id="IPR004977">
    <property type="entry name" value="Ribosomal_eS25"/>
</dbReference>
<dbReference type="InterPro" id="IPR036390">
    <property type="entry name" value="WH_DNA-bd_sf"/>
</dbReference>
<dbReference type="NCBIfam" id="NF006814">
    <property type="entry name" value="PRK09334.1-4"/>
    <property type="match status" value="1"/>
</dbReference>
<dbReference type="PANTHER" id="PTHR12850">
    <property type="entry name" value="40S RIBOSOMAL PROTEIN S25"/>
    <property type="match status" value="1"/>
</dbReference>
<dbReference type="Pfam" id="PF03297">
    <property type="entry name" value="Ribosomal_S25"/>
    <property type="match status" value="1"/>
</dbReference>
<dbReference type="SUPFAM" id="SSF46785">
    <property type="entry name" value="Winged helix' DNA-binding domain"/>
    <property type="match status" value="1"/>
</dbReference>